<keyword id="KW-0378">Hydrolase</keyword>
<keyword id="KW-0443">Lipid metabolism</keyword>
<keyword id="KW-0472">Membrane</keyword>
<keyword id="KW-1208">Phospholipid metabolism</keyword>
<keyword id="KW-1185">Reference proteome</keyword>
<keyword id="KW-0732">Signal</keyword>
<keyword id="KW-0812">Transmembrane</keyword>
<keyword id="KW-1133">Transmembrane helix</keyword>
<evidence type="ECO:0000255" key="1"/>
<evidence type="ECO:0000269" key="2">
    <source>
    </source>
</evidence>
<evidence type="ECO:0000303" key="3">
    <source>
    </source>
</evidence>
<evidence type="ECO:0000305" key="4"/>
<evidence type="ECO:0000305" key="5">
    <source>
    </source>
</evidence>
<evidence type="ECO:0000312" key="6">
    <source>
        <dbReference type="EMBL" id="AAO76632.1"/>
    </source>
</evidence>
<evidence type="ECO:0000312" key="7">
    <source>
        <dbReference type="Proteomes" id="UP000001414"/>
    </source>
</evidence>
<proteinExistence type="evidence at protein level"/>
<comment type="function">
    <text evidence="2">May be responsible for the conversion of phosphatidylinositol phosphate diacylglycerol (PIP-DAG) to phosphatidylinositol diacylglycerol (PI-DAG), making it a key enzyme in the inositol glycerophospholipid biosynthesis pathway.</text>
</comment>
<comment type="catalytic activity">
    <reaction evidence="5">
        <text>a 1,2-diacyl-sn-glycero-3-phospho-(1D-myo-inositol-3-phosphate) + H2O = a 1,2-diacyl-sn-glycero-3-phospho-(1D-myo-inositol) + phosphate</text>
        <dbReference type="Rhea" id="RHEA:12316"/>
        <dbReference type="ChEBI" id="CHEBI:15377"/>
        <dbReference type="ChEBI" id="CHEBI:43474"/>
        <dbReference type="ChEBI" id="CHEBI:57880"/>
        <dbReference type="ChEBI" id="CHEBI:58088"/>
        <dbReference type="EC" id="3.1.3.64"/>
    </reaction>
</comment>
<comment type="subcellular location">
    <subcellularLocation>
        <location evidence="1">Membrane</location>
        <topology evidence="1">Multi-pass membrane protein</topology>
    </subcellularLocation>
</comment>
<comment type="disruption phenotype">
    <text evidence="2">Phosphatidylinositol dihydroceramide (PI-DHC) and phosphatidylinositol diacylglycerol (PI-DAG) is absent; synthesis of other glycerophospholipids is unaffected.</text>
</comment>
<dbReference type="EC" id="3.1.3.64" evidence="5"/>
<dbReference type="EMBL" id="AE015928">
    <property type="protein sequence ID" value="AAO76632.1"/>
    <property type="molecule type" value="Genomic_DNA"/>
</dbReference>
<dbReference type="RefSeq" id="NP_810438.1">
    <property type="nucleotide sequence ID" value="NC_004663.1"/>
</dbReference>
<dbReference type="RefSeq" id="WP_008762241.1">
    <property type="nucleotide sequence ID" value="NZ_UYXG01000006.1"/>
</dbReference>
<dbReference type="FunCoup" id="Q8A7J9">
    <property type="interactions" value="141"/>
</dbReference>
<dbReference type="STRING" id="226186.BT_1525"/>
<dbReference type="PaxDb" id="226186-BT_1525"/>
<dbReference type="EnsemblBacteria" id="AAO76632">
    <property type="protein sequence ID" value="AAO76632"/>
    <property type="gene ID" value="BT_1525"/>
</dbReference>
<dbReference type="KEGG" id="bth:BT_1525"/>
<dbReference type="PATRIC" id="fig|226186.12.peg.1557"/>
<dbReference type="eggNOG" id="COG1267">
    <property type="taxonomic scope" value="Bacteria"/>
</dbReference>
<dbReference type="HOGENOM" id="CLU_103734_1_2_10"/>
<dbReference type="InParanoid" id="Q8A7J9"/>
<dbReference type="OrthoDB" id="9804091at2"/>
<dbReference type="Proteomes" id="UP000001414">
    <property type="component" value="Chromosome"/>
</dbReference>
<dbReference type="GO" id="GO:0016020">
    <property type="term" value="C:membrane"/>
    <property type="evidence" value="ECO:0007669"/>
    <property type="project" value="UniProtKB-SubCell"/>
</dbReference>
<dbReference type="GO" id="GO:0016791">
    <property type="term" value="F:phosphatase activity"/>
    <property type="evidence" value="ECO:0000318"/>
    <property type="project" value="GO_Central"/>
</dbReference>
<dbReference type="GO" id="GO:0008962">
    <property type="term" value="F:phosphatidylglycerophosphatase activity"/>
    <property type="evidence" value="ECO:0007669"/>
    <property type="project" value="InterPro"/>
</dbReference>
<dbReference type="GO" id="GO:0004438">
    <property type="term" value="F:phosphatidylinositol-3-phosphate phosphatase activity"/>
    <property type="evidence" value="ECO:0000315"/>
    <property type="project" value="UniProtKB"/>
</dbReference>
<dbReference type="GO" id="GO:0046488">
    <property type="term" value="P:phosphatidylinositol metabolic process"/>
    <property type="evidence" value="ECO:0000315"/>
    <property type="project" value="UniProtKB"/>
</dbReference>
<dbReference type="GO" id="GO:0006665">
    <property type="term" value="P:sphingolipid metabolic process"/>
    <property type="evidence" value="ECO:0000315"/>
    <property type="project" value="UniProtKB"/>
</dbReference>
<dbReference type="CDD" id="cd06971">
    <property type="entry name" value="PgpA"/>
    <property type="match status" value="1"/>
</dbReference>
<dbReference type="InterPro" id="IPR026037">
    <property type="entry name" value="PgpA"/>
</dbReference>
<dbReference type="InterPro" id="IPR036681">
    <property type="entry name" value="PgpA-like_sf"/>
</dbReference>
<dbReference type="InterPro" id="IPR007686">
    <property type="entry name" value="YutG/PgpA"/>
</dbReference>
<dbReference type="PANTHER" id="PTHR36305">
    <property type="entry name" value="PHOSPHATIDYLGLYCEROPHOSPHATASE A"/>
    <property type="match status" value="1"/>
</dbReference>
<dbReference type="PANTHER" id="PTHR36305:SF1">
    <property type="entry name" value="PHOSPHATIDYLGLYCEROPHOSPHATASE A"/>
    <property type="match status" value="1"/>
</dbReference>
<dbReference type="Pfam" id="PF04608">
    <property type="entry name" value="PgpA"/>
    <property type="match status" value="1"/>
</dbReference>
<dbReference type="PIRSF" id="PIRSF006162">
    <property type="entry name" value="PgpA"/>
    <property type="match status" value="1"/>
</dbReference>
<dbReference type="SUPFAM" id="SSF101307">
    <property type="entry name" value="YutG-like"/>
    <property type="match status" value="1"/>
</dbReference>
<name>INP_BACTN</name>
<reference evidence="7" key="1">
    <citation type="journal article" date="2003" name="Science">
        <title>A genomic view of the human-Bacteroides thetaiotaomicron symbiosis.</title>
        <authorList>
            <person name="Xu J."/>
            <person name="Bjursell M.K."/>
            <person name="Himrod J."/>
            <person name="Deng S."/>
            <person name="Carmichael L.K."/>
            <person name="Chiang H.C."/>
            <person name="Hooper L.V."/>
            <person name="Gordon J.I."/>
        </authorList>
    </citation>
    <scope>NUCLEOTIDE SEQUENCE [LARGE SCALE GENOMIC DNA]</scope>
    <source>
        <strain evidence="7">ATCC 29148 / DSM 2079 / JCM 5827 / CCUG 10774 / NCTC 10582 / VPI-5482 / E50</strain>
    </source>
</reference>
<reference evidence="7" key="2">
    <citation type="journal article" date="2009" name="Proc. Natl. Acad. Sci. U.S.A.">
        <title>Characterizing a model human gut microbiota composed of members of its two dominant bacterial phyla.</title>
        <authorList>
            <person name="Mahowald M.A."/>
            <person name="Rey F.E."/>
            <person name="Seedorf H."/>
            <person name="Turnbaugh P.J."/>
            <person name="Fulton R.S."/>
            <person name="Wollam A."/>
            <person name="Shah N."/>
            <person name="Wang C."/>
            <person name="Magrini V."/>
            <person name="Wilson R.K."/>
            <person name="Cantarel B.L."/>
            <person name="Coutinho P.M."/>
            <person name="Henrissat B."/>
            <person name="Crock L.W."/>
            <person name="Russell A."/>
            <person name="Verberkmoes N.C."/>
            <person name="Hettich R.L."/>
            <person name="Gordon J.I."/>
        </authorList>
    </citation>
    <scope>NUCLEOTIDE SEQUENCE [LARGE SCALE GENOMIC DNA]</scope>
    <source>
        <strain evidence="7">ATCC 29148 / DSM 2079 / JCM 5827 / CCUG 10774 / NCTC 10582 / VPI-5482 / E50</strain>
    </source>
</reference>
<reference evidence="4" key="3">
    <citation type="journal article" date="2022" name="Nat. Microbiol.">
        <title>Characterization of inositol lipid metabolism in gut-associated Bacteroidetes.</title>
        <authorList>
            <person name="Heaver S.L."/>
            <person name="Le H.H."/>
            <person name="Tang P."/>
            <person name="Basle A."/>
            <person name="Mirretta Barone C."/>
            <person name="Vu D.L."/>
            <person name="Waters J.L."/>
            <person name="Marles-Wright J."/>
            <person name="Johnson E.L."/>
            <person name="Campopiano D.J."/>
            <person name="Ley R.E."/>
        </authorList>
    </citation>
    <scope>FUNCTION</scope>
    <scope>CATALYTIC ACTIVITY</scope>
    <scope>DISRUPTION PHENOTYPE</scope>
</reference>
<accession>Q8A7J9</accession>
<organism evidence="7">
    <name type="scientific">Bacteroides thetaiotaomicron (strain ATCC 29148 / DSM 2079 / JCM 5827 / CCUG 10774 / NCTC 10582 / VPI-5482 / E50)</name>
    <dbReference type="NCBI Taxonomy" id="226186"/>
    <lineage>
        <taxon>Bacteria</taxon>
        <taxon>Pseudomonadati</taxon>
        <taxon>Bacteroidota</taxon>
        <taxon>Bacteroidia</taxon>
        <taxon>Bacteroidales</taxon>
        <taxon>Bacteroidaceae</taxon>
        <taxon>Bacteroides</taxon>
    </lineage>
</organism>
<feature type="signal peptide" evidence="1">
    <location>
        <begin position="1"/>
        <end position="16"/>
    </location>
</feature>
<feature type="chain" id="PRO_0000456700" description="Putative phosphatidylinositol-3-phosphatase" evidence="1">
    <location>
        <begin position="17"/>
        <end position="159"/>
    </location>
</feature>
<feature type="transmembrane region" description="Helical" evidence="1">
    <location>
        <begin position="30"/>
        <end position="50"/>
    </location>
</feature>
<feature type="transmembrane region" description="Helical" evidence="1">
    <location>
        <begin position="54"/>
        <end position="74"/>
    </location>
</feature>
<feature type="transmembrane region" description="Helical" evidence="1">
    <location>
        <begin position="104"/>
        <end position="124"/>
    </location>
</feature>
<feature type="transmembrane region" description="Helical" evidence="1">
    <location>
        <begin position="134"/>
        <end position="154"/>
    </location>
</feature>
<sequence>MKRPSFLPVLIGTGFGSGFSPFAPGTAGALLASIIWIALYFLLPFTALLWTTAALVVLFTFAGIWAANKLESCWGEDPSRVVVDEMVGVWIPLLAVPDNDRWYWYVIAAFALFRIFDIVKPLGVRKMENFKGGVGVMMDDVLAGVYSFILIAVARWVIG</sequence>
<gene>
    <name evidence="6" type="ordered locus">BT_1525</name>
</gene>
<protein>
    <recommendedName>
        <fullName evidence="4">Putative phosphatidylinositol-3-phosphatase</fullName>
    </recommendedName>
    <alternativeName>
        <fullName evidence="3">Phosphatidylinositol phosphate phosphatase</fullName>
        <shortName evidence="3">PIPPh</shortName>
        <ecNumber evidence="5">3.1.3.64</ecNumber>
    </alternativeName>
</protein>